<protein>
    <recommendedName>
        <fullName>Polyadenylate-binding protein-interacting protein 13</fullName>
        <shortName>PABP-interacting protein 13</shortName>
        <shortName>Poly(A)-binding protein-interacting protein 13</shortName>
    </recommendedName>
    <alternativeName>
        <fullName>PAM2-containing protein CID13</fullName>
    </alternativeName>
    <alternativeName>
        <fullName>Protein CTC-INTERACTING DOMAIN 13</fullName>
    </alternativeName>
</protein>
<dbReference type="EMBL" id="AB025641">
    <property type="protein sequence ID" value="BAB08927.1"/>
    <property type="molecule type" value="Genomic_DNA"/>
</dbReference>
<dbReference type="EMBL" id="CP002688">
    <property type="protein sequence ID" value="AED93311.1"/>
    <property type="molecule type" value="Genomic_DNA"/>
</dbReference>
<dbReference type="RefSeq" id="NP_197832.1">
    <property type="nucleotide sequence ID" value="NM_122352.1"/>
</dbReference>
<dbReference type="SMR" id="Q9FGE6"/>
<dbReference type="STRING" id="3702.Q9FGE6"/>
<dbReference type="iPTMnet" id="Q9FGE6"/>
<dbReference type="PaxDb" id="3702-AT5G24440.1"/>
<dbReference type="EnsemblPlants" id="AT5G24440.1">
    <property type="protein sequence ID" value="AT5G24440.1"/>
    <property type="gene ID" value="AT5G24440"/>
</dbReference>
<dbReference type="GeneID" id="832515"/>
<dbReference type="Gramene" id="AT5G24440.1">
    <property type="protein sequence ID" value="AT5G24440.1"/>
    <property type="gene ID" value="AT5G24440"/>
</dbReference>
<dbReference type="KEGG" id="ath:AT5G24440"/>
<dbReference type="Araport" id="AT5G24440"/>
<dbReference type="TAIR" id="AT5G24440">
    <property type="gene designation" value="CID13"/>
</dbReference>
<dbReference type="eggNOG" id="KOG0118">
    <property type="taxonomic scope" value="Eukaryota"/>
</dbReference>
<dbReference type="HOGENOM" id="CLU_042473_0_0_1"/>
<dbReference type="InParanoid" id="Q9FGE6"/>
<dbReference type="OMA" id="FFKTVCG"/>
<dbReference type="PhylomeDB" id="Q9FGE6"/>
<dbReference type="PRO" id="PR:Q9FGE6"/>
<dbReference type="Proteomes" id="UP000006548">
    <property type="component" value="Chromosome 5"/>
</dbReference>
<dbReference type="ExpressionAtlas" id="Q9FGE6">
    <property type="expression patterns" value="baseline and differential"/>
</dbReference>
<dbReference type="GO" id="GO:0003723">
    <property type="term" value="F:RNA binding"/>
    <property type="evidence" value="ECO:0007669"/>
    <property type="project" value="UniProtKB-KW"/>
</dbReference>
<dbReference type="CDD" id="cd12459">
    <property type="entry name" value="RRM1_CID8_like"/>
    <property type="match status" value="1"/>
</dbReference>
<dbReference type="CDD" id="cd12460">
    <property type="entry name" value="RRM2_CID8_like"/>
    <property type="match status" value="1"/>
</dbReference>
<dbReference type="Gene3D" id="3.30.70.330">
    <property type="match status" value="2"/>
</dbReference>
<dbReference type="InterPro" id="IPR034823">
    <property type="entry name" value="CID8-like_RRM1"/>
</dbReference>
<dbReference type="InterPro" id="IPR034825">
    <property type="entry name" value="CID8-like_RRM2"/>
</dbReference>
<dbReference type="InterPro" id="IPR012677">
    <property type="entry name" value="Nucleotide-bd_a/b_plait_sf"/>
</dbReference>
<dbReference type="InterPro" id="IPR009818">
    <property type="entry name" value="PAM2_motif"/>
</dbReference>
<dbReference type="InterPro" id="IPR035979">
    <property type="entry name" value="RBD_domain_sf"/>
</dbReference>
<dbReference type="InterPro" id="IPR000504">
    <property type="entry name" value="RRM_dom"/>
</dbReference>
<dbReference type="PANTHER" id="PTHR32343:SF22">
    <property type="entry name" value="LD29830P"/>
    <property type="match status" value="1"/>
</dbReference>
<dbReference type="PANTHER" id="PTHR32343">
    <property type="entry name" value="SERINE/ARGININE-RICH SPLICING FACTOR"/>
    <property type="match status" value="1"/>
</dbReference>
<dbReference type="Pfam" id="PF07145">
    <property type="entry name" value="PAM2"/>
    <property type="match status" value="1"/>
</dbReference>
<dbReference type="Pfam" id="PF00076">
    <property type="entry name" value="RRM_1"/>
    <property type="match status" value="2"/>
</dbReference>
<dbReference type="SMART" id="SM00360">
    <property type="entry name" value="RRM"/>
    <property type="match status" value="2"/>
</dbReference>
<dbReference type="SUPFAM" id="SSF54928">
    <property type="entry name" value="RNA-binding domain, RBD"/>
    <property type="match status" value="2"/>
</dbReference>
<dbReference type="PROSITE" id="PS50102">
    <property type="entry name" value="RRM"/>
    <property type="match status" value="2"/>
</dbReference>
<proteinExistence type="predicted"/>
<keyword id="KW-1185">Reference proteome</keyword>
<keyword id="KW-0677">Repeat</keyword>
<keyword id="KW-0694">RNA-binding</keyword>
<feature type="chain" id="PRO_0000428903" description="Polyadenylate-binding protein-interacting protein 13">
    <location>
        <begin position="1"/>
        <end position="320"/>
    </location>
</feature>
<feature type="domain" description="RRM 1" evidence="1">
    <location>
        <begin position="137"/>
        <end position="212"/>
    </location>
</feature>
<feature type="domain" description="RRM 2" evidence="1">
    <location>
        <begin position="234"/>
        <end position="310"/>
    </location>
</feature>
<feature type="region of interest" description="Disordered" evidence="2">
    <location>
        <begin position="1"/>
        <end position="44"/>
    </location>
</feature>
<feature type="short sequence motif" description="PAM2-like">
    <location>
        <begin position="65"/>
        <end position="75"/>
    </location>
</feature>
<feature type="compositionally biased region" description="Polar residues" evidence="2">
    <location>
        <begin position="12"/>
        <end position="44"/>
    </location>
</feature>
<reference key="1">
    <citation type="submission" date="1999-04" db="EMBL/GenBank/DDBJ databases">
        <title>Structural analysis of Arabidopsis thaliana chromosome 5. XI.</title>
        <authorList>
            <person name="Kaneko T."/>
            <person name="Katoh T."/>
            <person name="Asamizu E."/>
            <person name="Sato S."/>
            <person name="Nakamura Y."/>
            <person name="Kotani H."/>
            <person name="Tabata S."/>
        </authorList>
    </citation>
    <scope>NUCLEOTIDE SEQUENCE [LARGE SCALE GENOMIC DNA]</scope>
    <source>
        <strain>cv. Columbia</strain>
    </source>
</reference>
<reference key="2">
    <citation type="journal article" date="2017" name="Plant J.">
        <title>Araport11: a complete reannotation of the Arabidopsis thaliana reference genome.</title>
        <authorList>
            <person name="Cheng C.Y."/>
            <person name="Krishnakumar V."/>
            <person name="Chan A.P."/>
            <person name="Thibaud-Nissen F."/>
            <person name="Schobel S."/>
            <person name="Town C.D."/>
        </authorList>
    </citation>
    <scope>GENOME REANNOTATION</scope>
    <source>
        <strain>cv. Columbia</strain>
    </source>
</reference>
<reference key="3">
    <citation type="journal article" date="2005" name="Mol. Genet. Genomics">
        <title>Four distinct classes of proteins as interaction partners of the PABC domain of Arabidopsis thaliana Poly(A)-binding proteins.</title>
        <authorList>
            <person name="Bravo J."/>
            <person name="Aguilar-Henonin L."/>
            <person name="Olmedo G."/>
            <person name="Guzman P."/>
        </authorList>
    </citation>
    <scope>GENE FAMILY</scope>
    <scope>PAM2 MOTIF</scope>
</reference>
<organism>
    <name type="scientific">Arabidopsis thaliana</name>
    <name type="common">Mouse-ear cress</name>
    <dbReference type="NCBI Taxonomy" id="3702"/>
    <lineage>
        <taxon>Eukaryota</taxon>
        <taxon>Viridiplantae</taxon>
        <taxon>Streptophyta</taxon>
        <taxon>Embryophyta</taxon>
        <taxon>Tracheophyta</taxon>
        <taxon>Spermatophyta</taxon>
        <taxon>Magnoliopsida</taxon>
        <taxon>eudicotyledons</taxon>
        <taxon>Gunneridae</taxon>
        <taxon>Pentapetalae</taxon>
        <taxon>rosids</taxon>
        <taxon>malvids</taxon>
        <taxon>Brassicales</taxon>
        <taxon>Brassicaceae</taxon>
        <taxon>Camelineae</taxon>
        <taxon>Arabidopsis</taxon>
    </lineage>
</organism>
<accession>Q9FGE6</accession>
<gene>
    <name type="primary">CID13</name>
    <name type="ordered locus">At5g24440</name>
    <name type="ORF">T31K7.2</name>
</gene>
<sequence>MAVAENVGVKVDSSNNQNIDNNTTSLVETKPSCSDDQTPKSKSSVLTNELIQRTSEVNLKSEISHLNPMAKEFVPSFLAQTHHSEFWGNRFWFTNHFPKQTIFLIGQFATMRRNFGKGRPWITKKTNLVQNEDMIKRTVYVSDIDNQVTEEQLASLFLSCGQVVDCRMCGDYKSILRFAFIEFTDAEGARSALRKSGTMFGSHPIRVFMSKTAIAPVNPSFLPQSKDELEKCGKTVYCTNIDKEVTKMELENFFKTVCGEVHHLRLLGDFYHQTRIAFVEFKLAESAISALNCSGVVLGELPIRVSPSKTPVRLHHSDLN</sequence>
<comment type="domain">
    <text>Contains a PAM2-like motif, which seems to be involved in the binding to the PABC/CTC domain of PAB proteins.</text>
</comment>
<evidence type="ECO:0000255" key="1">
    <source>
        <dbReference type="PROSITE-ProRule" id="PRU00176"/>
    </source>
</evidence>
<evidence type="ECO:0000256" key="2">
    <source>
        <dbReference type="SAM" id="MobiDB-lite"/>
    </source>
</evidence>
<name>CID13_ARATH</name>